<name>TPS8_ARATH</name>
<feature type="chain" id="PRO_0000324829" description="Probable alpha,alpha-trehalose-phosphate synthase [UDP-forming] 8">
    <location>
        <begin position="1"/>
        <end position="856"/>
    </location>
</feature>
<feature type="region of interest" description="Glycosyltransferase">
    <location>
        <begin position="57"/>
        <end position="541"/>
    </location>
</feature>
<feature type="modified residue" description="Phosphoserine" evidence="1">
    <location>
        <position position="5"/>
    </location>
</feature>
<feature type="modified residue" description="Phosphothreonine" evidence="1">
    <location>
        <position position="32"/>
    </location>
</feature>
<sequence length="856" mass="97561">MVSRSCANFLDLSSWDLLDFPQTPRTLPRVMTVPGIITDVDGDTTSEVTSTSGGSRERKIIVANMLPLQSKRDAETGKWCFNWDEDSLQLQLRDGFSSETEFLYVGSLNVDIETNEQEEVSQKLLEEFNCVATFLSQELQEMFYLGFCKHQLWPLFHYMLPMFPDHGDRFDRRLWQAYVSANKIFSDRVMEVINPEDDYVWIQDYHLMVLPTFLRKRFNRIKLGFFLHSPFPSSEIYRTLPVRDEILRGLLNCDLIGFHTFDYARHFLSCCSRMLGLDYESKRGHIGLDYFGRTVYIKILPVGVHMGRLESVLSLDSTAAKTKEIQEQFKGKKLVLGIDDMDIFKGISLKLIAMEHLFETYWHLKGKVVLVQIVNPARSSGKDVEEAKRETYETARRINERYGTSDYKPIVLIDRLVPRSEKTAYYAAADCCLVNAVRDGMNLVPYKYIVCRQGTRSNKAVVDSSPRTSTLVVSEFIGCSPSLSGAIRVNPWDVDAVAEAVNSALKMSETEKQLRHEKHYHYISTHDVGYWAKSFMQDLERACRDHYSKRCWGIGFGLGFRVLSLSPSFRKLSVEHIVPVYRKTQRRAIFLDYDGTLVPESSIVQDPSNEVVSVLKALCEDPNNTVFIVSGRGRESLSNWLSPCENLGIAAEHGYFIRWKSKDEWETCYSPTDTEWRSMVEPVMRSYMEATDGTSIEFKESALVWHHQDADPDFGSCQAKEMLDHLESVLANEPVVVKRGQHIVEVKPQGVSKGLAAEKVIREMVERGEPPEMVMCIGDDRSDEDMFESILSTVTNPELLVQPEVFACTVGRKPSKAKYFLDDEADVLKLLRGLGDSSSSLKPSSSHTQVAFESIV</sequence>
<reference key="1">
    <citation type="journal article" date="2001" name="J. Exp. Bot.">
        <title>Trehalose metabolism in Arabidopsis: occurrence of trehalose and molecular cloning and characterization of trehalose-6-phosphate synthase homologues.</title>
        <authorList>
            <person name="Vogel G."/>
            <person name="Fiehn O."/>
            <person name="Jean-Richard-dit-Bressel L."/>
            <person name="Boller T."/>
            <person name="Wiemken A."/>
            <person name="Aeschbacher R.A."/>
            <person name="Wingler A."/>
        </authorList>
    </citation>
    <scope>NUCLEOTIDE SEQUENCE [MRNA]</scope>
    <scope>TISSUE SPECIFICITY</scope>
    <source>
        <strain>cv. Landsberg erecta</strain>
    </source>
</reference>
<reference key="2">
    <citation type="journal article" date="2000" name="Nature">
        <title>Sequence and analysis of chromosome 1 of the plant Arabidopsis thaliana.</title>
        <authorList>
            <person name="Theologis A."/>
            <person name="Ecker J.R."/>
            <person name="Palm C.J."/>
            <person name="Federspiel N.A."/>
            <person name="Kaul S."/>
            <person name="White O."/>
            <person name="Alonso J."/>
            <person name="Altafi H."/>
            <person name="Araujo R."/>
            <person name="Bowman C.L."/>
            <person name="Brooks S.Y."/>
            <person name="Buehler E."/>
            <person name="Chan A."/>
            <person name="Chao Q."/>
            <person name="Chen H."/>
            <person name="Cheuk R.F."/>
            <person name="Chin C.W."/>
            <person name="Chung M.K."/>
            <person name="Conn L."/>
            <person name="Conway A.B."/>
            <person name="Conway A.R."/>
            <person name="Creasy T.H."/>
            <person name="Dewar K."/>
            <person name="Dunn P."/>
            <person name="Etgu P."/>
            <person name="Feldblyum T.V."/>
            <person name="Feng J.-D."/>
            <person name="Fong B."/>
            <person name="Fujii C.Y."/>
            <person name="Gill J.E."/>
            <person name="Goldsmith A.D."/>
            <person name="Haas B."/>
            <person name="Hansen N.F."/>
            <person name="Hughes B."/>
            <person name="Huizar L."/>
            <person name="Hunter J.L."/>
            <person name="Jenkins J."/>
            <person name="Johnson-Hopson C."/>
            <person name="Khan S."/>
            <person name="Khaykin E."/>
            <person name="Kim C.J."/>
            <person name="Koo H.L."/>
            <person name="Kremenetskaia I."/>
            <person name="Kurtz D.B."/>
            <person name="Kwan A."/>
            <person name="Lam B."/>
            <person name="Langin-Hooper S."/>
            <person name="Lee A."/>
            <person name="Lee J.M."/>
            <person name="Lenz C.A."/>
            <person name="Li J.H."/>
            <person name="Li Y.-P."/>
            <person name="Lin X."/>
            <person name="Liu S.X."/>
            <person name="Liu Z.A."/>
            <person name="Luros J.S."/>
            <person name="Maiti R."/>
            <person name="Marziali A."/>
            <person name="Militscher J."/>
            <person name="Miranda M."/>
            <person name="Nguyen M."/>
            <person name="Nierman W.C."/>
            <person name="Osborne B.I."/>
            <person name="Pai G."/>
            <person name="Peterson J."/>
            <person name="Pham P.K."/>
            <person name="Rizzo M."/>
            <person name="Rooney T."/>
            <person name="Rowley D."/>
            <person name="Sakano H."/>
            <person name="Salzberg S.L."/>
            <person name="Schwartz J.R."/>
            <person name="Shinn P."/>
            <person name="Southwick A.M."/>
            <person name="Sun H."/>
            <person name="Tallon L.J."/>
            <person name="Tambunga G."/>
            <person name="Toriumi M.J."/>
            <person name="Town C.D."/>
            <person name="Utterback T."/>
            <person name="Van Aken S."/>
            <person name="Vaysberg M."/>
            <person name="Vysotskaia V.S."/>
            <person name="Walker M."/>
            <person name="Wu D."/>
            <person name="Yu G."/>
            <person name="Fraser C.M."/>
            <person name="Venter J.C."/>
            <person name="Davis R.W."/>
        </authorList>
    </citation>
    <scope>NUCLEOTIDE SEQUENCE [LARGE SCALE GENOMIC DNA]</scope>
    <source>
        <strain>cv. Columbia</strain>
    </source>
</reference>
<reference key="3">
    <citation type="journal article" date="2017" name="Plant J.">
        <title>Araport11: a complete reannotation of the Arabidopsis thaliana reference genome.</title>
        <authorList>
            <person name="Cheng C.Y."/>
            <person name="Krishnakumar V."/>
            <person name="Chan A.P."/>
            <person name="Thibaud-Nissen F."/>
            <person name="Schobel S."/>
            <person name="Town C.D."/>
        </authorList>
    </citation>
    <scope>GENOME REANNOTATION</scope>
    <source>
        <strain>cv. Columbia</strain>
    </source>
</reference>
<reference key="4">
    <citation type="submission" date="2006-07" db="EMBL/GenBank/DDBJ databases">
        <title>Large-scale analysis of RIKEN Arabidopsis full-length (RAFL) cDNAs.</title>
        <authorList>
            <person name="Totoki Y."/>
            <person name="Seki M."/>
            <person name="Ishida J."/>
            <person name="Nakajima M."/>
            <person name="Enju A."/>
            <person name="Kamiya A."/>
            <person name="Narusaka M."/>
            <person name="Shin-i T."/>
            <person name="Nakagawa M."/>
            <person name="Sakamoto N."/>
            <person name="Oishi K."/>
            <person name="Kohara Y."/>
            <person name="Kobayashi M."/>
            <person name="Toyoda A."/>
            <person name="Sakaki Y."/>
            <person name="Sakurai T."/>
            <person name="Iida K."/>
            <person name="Akiyama K."/>
            <person name="Satou M."/>
            <person name="Toyoda T."/>
            <person name="Konagaya A."/>
            <person name="Carninci P."/>
            <person name="Kawai J."/>
            <person name="Hayashizaki Y."/>
            <person name="Shinozaki K."/>
        </authorList>
    </citation>
    <scope>NUCLEOTIDE SEQUENCE [LARGE SCALE MRNA]</scope>
    <source>
        <strain>cv. Columbia</strain>
    </source>
</reference>
<reference key="5">
    <citation type="submission" date="1999-05" db="EMBL/GenBank/DDBJ databases">
        <title>Isolation and characterization of Arabidopsis trehalose-6-phosphate synthase.</title>
        <authorList>
            <person name="Kim Y.S."/>
            <person name="Lee E.J."/>
            <person name="Kim J.S."/>
            <person name="Lim D.H."/>
            <person name="Kim C.K."/>
            <person name="Chung C.H."/>
        </authorList>
    </citation>
    <scope>NUCLEOTIDE SEQUENCE [MRNA] OF 31-856</scope>
</reference>
<reference key="6">
    <citation type="journal article" date="2001" name="Trends Plant Sci.">
        <title>An unexpected plethora of trehalose biosynthesis genes in Arabidopsis thaliana.</title>
        <authorList>
            <person name="Leyman B."/>
            <person name="Van Dijck P."/>
            <person name="Thevelein J.M."/>
        </authorList>
    </citation>
    <scope>GENE FAMILY</scope>
    <scope>NOMENCLATURE</scope>
</reference>
<evidence type="ECO:0000250" key="1">
    <source>
        <dbReference type="UniProtKB" id="O23617"/>
    </source>
</evidence>
<evidence type="ECO:0000269" key="2">
    <source>
    </source>
</evidence>
<evidence type="ECO:0000305" key="3"/>
<organism>
    <name type="scientific">Arabidopsis thaliana</name>
    <name type="common">Mouse-ear cress</name>
    <dbReference type="NCBI Taxonomy" id="3702"/>
    <lineage>
        <taxon>Eukaryota</taxon>
        <taxon>Viridiplantae</taxon>
        <taxon>Streptophyta</taxon>
        <taxon>Embryophyta</taxon>
        <taxon>Tracheophyta</taxon>
        <taxon>Spermatophyta</taxon>
        <taxon>Magnoliopsida</taxon>
        <taxon>eudicotyledons</taxon>
        <taxon>Gunneridae</taxon>
        <taxon>Pentapetalae</taxon>
        <taxon>rosids</taxon>
        <taxon>malvids</taxon>
        <taxon>Brassicales</taxon>
        <taxon>Brassicaceae</taxon>
        <taxon>Camelineae</taxon>
        <taxon>Arabidopsis</taxon>
    </lineage>
</organism>
<gene>
    <name type="primary">TPS8</name>
    <name type="synonym">TPS2</name>
    <name type="synonym">TPSC</name>
    <name type="ordered locus">At1g70290</name>
    <name type="ORF">F17O7.18</name>
</gene>
<keyword id="KW-0328">Glycosyltransferase</keyword>
<keyword id="KW-0597">Phosphoprotein</keyword>
<keyword id="KW-1185">Reference proteome</keyword>
<keyword id="KW-0808">Transferase</keyword>
<proteinExistence type="evidence at transcript level"/>
<protein>
    <recommendedName>
        <fullName>Probable alpha,alpha-trehalose-phosphate synthase [UDP-forming] 8</fullName>
        <ecNumber>2.4.1.15</ecNumber>
    </recommendedName>
    <alternativeName>
        <fullName>Trehalose-6-phosphate synthase 8</fullName>
        <shortName>AtTPS8</shortName>
    </alternativeName>
</protein>
<accession>Q0WUI9</accession>
<accession>O64608</accession>
<dbReference type="EC" id="2.4.1.15"/>
<dbReference type="EMBL" id="AC003671">
    <property type="protein sequence ID" value="AAC18810.1"/>
    <property type="status" value="ALT_INIT"/>
    <property type="molecule type" value="Genomic_DNA"/>
</dbReference>
<dbReference type="EMBL" id="CP002684">
    <property type="protein sequence ID" value="AEE35042.1"/>
    <property type="molecule type" value="Genomic_DNA"/>
</dbReference>
<dbReference type="EMBL" id="AK227167">
    <property type="protein sequence ID" value="BAE99209.1"/>
    <property type="molecule type" value="mRNA"/>
</dbReference>
<dbReference type="EMBL" id="AF155150">
    <property type="protein sequence ID" value="AAO15311.1"/>
    <property type="molecule type" value="mRNA"/>
</dbReference>
<dbReference type="PIR" id="T01494">
    <property type="entry name" value="T01494"/>
</dbReference>
<dbReference type="RefSeq" id="NP_177186.2">
    <property type="nucleotide sequence ID" value="NM_105697.4"/>
</dbReference>
<dbReference type="SMR" id="Q0WUI9"/>
<dbReference type="BioGRID" id="28585">
    <property type="interactions" value="1"/>
</dbReference>
<dbReference type="FunCoup" id="Q0WUI9">
    <property type="interactions" value="380"/>
</dbReference>
<dbReference type="IntAct" id="Q0WUI9">
    <property type="interactions" value="12"/>
</dbReference>
<dbReference type="STRING" id="3702.Q0WUI9"/>
<dbReference type="CAZy" id="GT20">
    <property type="family name" value="Glycosyltransferase Family 20"/>
</dbReference>
<dbReference type="iPTMnet" id="Q0WUI9"/>
<dbReference type="PaxDb" id="3702-AT1G70290.1"/>
<dbReference type="ProteomicsDB" id="228333"/>
<dbReference type="EnsemblPlants" id="AT1G70290.1">
    <property type="protein sequence ID" value="AT1G70290.1"/>
    <property type="gene ID" value="AT1G70290"/>
</dbReference>
<dbReference type="GeneID" id="843365"/>
<dbReference type="Gramene" id="AT1G70290.1">
    <property type="protein sequence ID" value="AT1G70290.1"/>
    <property type="gene ID" value="AT1G70290"/>
</dbReference>
<dbReference type="KEGG" id="ath:AT1G70290"/>
<dbReference type="Araport" id="AT1G70290"/>
<dbReference type="TAIR" id="AT1G70290">
    <property type="gene designation" value="TPS8"/>
</dbReference>
<dbReference type="eggNOG" id="KOG1050">
    <property type="taxonomic scope" value="Eukaryota"/>
</dbReference>
<dbReference type="HOGENOM" id="CLU_002351_3_1_1"/>
<dbReference type="InParanoid" id="Q0WUI9"/>
<dbReference type="OMA" id="ACHERKI"/>
<dbReference type="PhylomeDB" id="Q0WUI9"/>
<dbReference type="BioCyc" id="ARA:AT1G70290-MONOMER"/>
<dbReference type="PRO" id="PR:Q0WUI9"/>
<dbReference type="Proteomes" id="UP000006548">
    <property type="component" value="Chromosome 1"/>
</dbReference>
<dbReference type="ExpressionAtlas" id="Q0WUI9">
    <property type="expression patterns" value="baseline and differential"/>
</dbReference>
<dbReference type="GO" id="GO:0016757">
    <property type="term" value="F:glycosyltransferase activity"/>
    <property type="evidence" value="ECO:0007669"/>
    <property type="project" value="UniProtKB-KW"/>
</dbReference>
<dbReference type="GO" id="GO:0005992">
    <property type="term" value="P:trehalose biosynthetic process"/>
    <property type="evidence" value="ECO:0007669"/>
    <property type="project" value="InterPro"/>
</dbReference>
<dbReference type="CDD" id="cd03788">
    <property type="entry name" value="GT20_TPS"/>
    <property type="match status" value="1"/>
</dbReference>
<dbReference type="CDD" id="cd01627">
    <property type="entry name" value="HAD_TPP"/>
    <property type="match status" value="1"/>
</dbReference>
<dbReference type="FunFam" id="3.40.50.2000:FF:000010">
    <property type="entry name" value="Alpha,alpha-trehalose-phosphate synthase"/>
    <property type="match status" value="1"/>
</dbReference>
<dbReference type="FunFam" id="3.40.50.1000:FF:000052">
    <property type="entry name" value="Alpha,alpha-trehalose-phosphate synthase [UDP-forming] 6"/>
    <property type="match status" value="1"/>
</dbReference>
<dbReference type="FunFam" id="3.40.50.1000:FF:000054">
    <property type="entry name" value="alpha,alpha-trehalose-phosphate synthase [UDP-forming] 6"/>
    <property type="match status" value="1"/>
</dbReference>
<dbReference type="FunFam" id="3.40.50.2000:FF:000017">
    <property type="entry name" value="alpha,alpha-trehalose-phosphate synthase [UDP-forming] 6"/>
    <property type="match status" value="1"/>
</dbReference>
<dbReference type="Gene3D" id="3.40.50.2000">
    <property type="entry name" value="Glycogen Phosphorylase B"/>
    <property type="match status" value="2"/>
</dbReference>
<dbReference type="Gene3D" id="3.40.50.1000">
    <property type="entry name" value="HAD superfamily/HAD-like"/>
    <property type="match status" value="2"/>
</dbReference>
<dbReference type="InterPro" id="IPR001830">
    <property type="entry name" value="Glyco_trans_20"/>
</dbReference>
<dbReference type="InterPro" id="IPR036412">
    <property type="entry name" value="HAD-like_sf"/>
</dbReference>
<dbReference type="InterPro" id="IPR006379">
    <property type="entry name" value="HAD-SF_hydro_IIB"/>
</dbReference>
<dbReference type="InterPro" id="IPR023214">
    <property type="entry name" value="HAD_sf"/>
</dbReference>
<dbReference type="InterPro" id="IPR003337">
    <property type="entry name" value="Trehalose_PPase"/>
</dbReference>
<dbReference type="NCBIfam" id="TIGR01484">
    <property type="entry name" value="HAD-SF-IIB"/>
    <property type="match status" value="1"/>
</dbReference>
<dbReference type="NCBIfam" id="TIGR00685">
    <property type="entry name" value="T6PP"/>
    <property type="match status" value="1"/>
</dbReference>
<dbReference type="PANTHER" id="PTHR10788:SF112">
    <property type="entry name" value="ALPHA,ALPHA-TREHALOSE-PHOSPHATE SYNTHASE [UDP-FORMING] 8-RELATED"/>
    <property type="match status" value="1"/>
</dbReference>
<dbReference type="PANTHER" id="PTHR10788">
    <property type="entry name" value="TREHALOSE-6-PHOSPHATE SYNTHASE"/>
    <property type="match status" value="1"/>
</dbReference>
<dbReference type="Pfam" id="PF00982">
    <property type="entry name" value="Glyco_transf_20"/>
    <property type="match status" value="1"/>
</dbReference>
<dbReference type="Pfam" id="PF02358">
    <property type="entry name" value="Trehalose_PPase"/>
    <property type="match status" value="1"/>
</dbReference>
<dbReference type="SUPFAM" id="SSF56784">
    <property type="entry name" value="HAD-like"/>
    <property type="match status" value="1"/>
</dbReference>
<dbReference type="SUPFAM" id="SSF53756">
    <property type="entry name" value="UDP-Glycosyltransferase/glycogen phosphorylase"/>
    <property type="match status" value="1"/>
</dbReference>
<comment type="catalytic activity">
    <reaction>
        <text>D-glucose 6-phosphate + UDP-alpha-D-glucose = alpha,alpha-trehalose 6-phosphate + UDP + H(+)</text>
        <dbReference type="Rhea" id="RHEA:18889"/>
        <dbReference type="ChEBI" id="CHEBI:15378"/>
        <dbReference type="ChEBI" id="CHEBI:58223"/>
        <dbReference type="ChEBI" id="CHEBI:58429"/>
        <dbReference type="ChEBI" id="CHEBI:58885"/>
        <dbReference type="ChEBI" id="CHEBI:61548"/>
        <dbReference type="EC" id="2.4.1.15"/>
    </reaction>
</comment>
<comment type="tissue specificity">
    <text evidence="2">Expressed in leaves, roots, stems and flowers.</text>
</comment>
<comment type="similarity">
    <text evidence="3">In the N-terminal section; belongs to the glycosyltransferase 20 family.</text>
</comment>
<comment type="similarity">
    <text evidence="3">In the C-terminal section; belongs to the trehalose phosphatase family.</text>
</comment>
<comment type="sequence caution" evidence="3">
    <conflict type="erroneous initiation">
        <sequence resource="EMBL-CDS" id="AAC18810"/>
    </conflict>
</comment>